<organism>
    <name type="scientific">Oryza sativa subsp. japonica</name>
    <name type="common">Rice</name>
    <dbReference type="NCBI Taxonomy" id="39947"/>
    <lineage>
        <taxon>Eukaryota</taxon>
        <taxon>Viridiplantae</taxon>
        <taxon>Streptophyta</taxon>
        <taxon>Embryophyta</taxon>
        <taxon>Tracheophyta</taxon>
        <taxon>Spermatophyta</taxon>
        <taxon>Magnoliopsida</taxon>
        <taxon>Liliopsida</taxon>
        <taxon>Poales</taxon>
        <taxon>Poaceae</taxon>
        <taxon>BOP clade</taxon>
        <taxon>Oryzoideae</taxon>
        <taxon>Oryzeae</taxon>
        <taxon>Oryzinae</taxon>
        <taxon>Oryza</taxon>
        <taxon>Oryza sativa</taxon>
    </lineage>
</organism>
<sequence>MAGFSHLPQQMEHGLITNNGFLFCHGSHGGAATTTAPAIPEDASMETSSVVLDTSPQDKKRKPREEDTASLNSAHSKEAKENGRKRGGKKHSRDQMEEEAPQGFIHVRARRGQATDSHSLAERVRRERISERMRMLQALVPGCDKVTGKALILDEIINYVQSLQNQVEFLSMRIASLSPVLYGFGIDSDAFSDHSQKMEGMFHEAVAIPASVLNRGSSPAQSHAIMDTSNTSPTPYTLQVQGGSNNNSLSQDNGSYIMQTVGEPRQELFNQVVLNNYMCSFQ</sequence>
<gene>
    <name evidence="9 10" type="primary">BC1</name>
    <name evidence="8" type="synonym">bHLH081</name>
    <name evidence="11" type="ordered locus">Os09g0510500</name>
    <name evidence="11" type="ordered locus">LOC_Os09g33580</name>
    <name evidence="14" type="ORF">OsJ_29973</name>
    <name evidence="13" type="ORF">OSNPB_090510500</name>
</gene>
<proteinExistence type="evidence at protein level"/>
<name>BC1_ORYSJ</name>
<comment type="function">
    <text evidence="4 6">Transcription activator that contributes, together with LO9-177 and ILI5/BUL1, to the promotion of leaf inclination and grain size by modulating cell elongation (PubMed:27879391). Involved in the RLI1-dependent modulation of leaf inclination by promoting lamina joint cell elongation, especially in response to phosphate (Pi) availability (PubMed:29610209).</text>
</comment>
<comment type="subunit">
    <text evidence="4 5 7 11">Homodimer (Probable). Component of a nuclear cell elongation controlling complex made of ILI5/BUL1, LO9-177 and BC1 (PubMed:27879391, PubMed:28029278). Interacts with ILI5/BUL1 only in the presence of LO9-177 (PubMed:27879391). Interacts with IBH1 (PubMed:27879391). Binds to LO9-177 in the nucleus (PubMed:27879391). Interacts with BCL1 (PubMed:34360554).</text>
</comment>
<comment type="subcellular location">
    <subcellularLocation>
        <location evidence="1 2 4">Nucleus</location>
    </subcellularLocation>
</comment>
<comment type="tissue specificity">
    <text evidence="4">Preferentially present in anthers and leaves lamina joints (PubMed:27879391). Expressed in seedlings, leaves sheaths, collars and panicles (PubMed:27879391).</text>
</comment>
<comment type="developmental stage">
    <text evidence="4">In anthers, expressed in endotheciums and tapetums.</text>
</comment>
<comment type="induction">
    <text evidence="4 6">Triggered by the transcription factor RLI1 to regulate leaf inclination in response to phosphate (Pi) availability (PubMed:29610209). Repressed by phosphate (Pi) deficiency in lamina joint cells in a RLI1-dependent manner (PubMed:29610209). By brassinolide (BL) (PubMed:27879391).</text>
</comment>
<comment type="disruption phenotype">
    <text evidence="4 6">Reduced plant height and grain size (PubMed:27879391). Erected leaves, with reduced lamina joint adaxial and abaxial sclerenchyma cell length (PubMed:29610209).</text>
</comment>
<comment type="similarity">
    <text evidence="11">Belongs to the bHLH protein family.</text>
</comment>
<reference key="1">
    <citation type="journal article" date="2005" name="Nature">
        <title>The map-based sequence of the rice genome.</title>
        <authorList>
            <consortium name="International rice genome sequencing project (IRGSP)"/>
        </authorList>
    </citation>
    <scope>NUCLEOTIDE SEQUENCE [LARGE SCALE GENOMIC DNA]</scope>
    <source>
        <strain>cv. Nipponbare</strain>
    </source>
</reference>
<reference key="2">
    <citation type="journal article" date="2013" name="Rice">
        <title>Improvement of the Oryza sativa Nipponbare reference genome using next generation sequence and optical map data.</title>
        <authorList>
            <person name="Kawahara Y."/>
            <person name="de la Bastide M."/>
            <person name="Hamilton J.P."/>
            <person name="Kanamori H."/>
            <person name="McCombie W.R."/>
            <person name="Ouyang S."/>
            <person name="Schwartz D.C."/>
            <person name="Tanaka T."/>
            <person name="Wu J."/>
            <person name="Zhou S."/>
            <person name="Childs K.L."/>
            <person name="Davidson R.M."/>
            <person name="Lin H."/>
            <person name="Quesada-Ocampo L."/>
            <person name="Vaillancourt B."/>
            <person name="Sakai H."/>
            <person name="Lee S.S."/>
            <person name="Kim J."/>
            <person name="Numa H."/>
            <person name="Itoh T."/>
            <person name="Buell C.R."/>
            <person name="Matsumoto T."/>
        </authorList>
    </citation>
    <scope>GENOME REANNOTATION</scope>
    <source>
        <strain>cv. Nipponbare</strain>
    </source>
</reference>
<reference key="3">
    <citation type="journal article" date="2003" name="Science">
        <title>Collection, mapping, and annotation of over 28,000 cDNA clones from japonica rice.</title>
        <authorList>
            <consortium name="The rice full-length cDNA consortium"/>
        </authorList>
    </citation>
    <scope>NUCLEOTIDE SEQUENCE [LARGE SCALE MRNA]</scope>
    <source>
        <strain>cv. Nipponbare</strain>
    </source>
</reference>
<reference key="4">
    <citation type="journal article" date="2008" name="Nucleic Acids Res.">
        <title>The rice annotation project database (RAP-DB): 2008 update.</title>
        <authorList>
            <consortium name="The rice annotation project (RAP)"/>
        </authorList>
    </citation>
    <scope>GENOME REANNOTATION</scope>
    <source>
        <strain>cv. Nipponbare</strain>
    </source>
</reference>
<reference key="5">
    <citation type="journal article" date="2005" name="PLoS Biol.">
        <title>The genomes of Oryza sativa: a history of duplications.</title>
        <authorList>
            <person name="Yu J."/>
            <person name="Wang J."/>
            <person name="Lin W."/>
            <person name="Li S."/>
            <person name="Li H."/>
            <person name="Zhou J."/>
            <person name="Ni P."/>
            <person name="Dong W."/>
            <person name="Hu S."/>
            <person name="Zeng C."/>
            <person name="Zhang J."/>
            <person name="Zhang Y."/>
            <person name="Li R."/>
            <person name="Xu Z."/>
            <person name="Li S."/>
            <person name="Li X."/>
            <person name="Zheng H."/>
            <person name="Cong L."/>
            <person name="Lin L."/>
            <person name="Yin J."/>
            <person name="Geng J."/>
            <person name="Li G."/>
            <person name="Shi J."/>
            <person name="Liu J."/>
            <person name="Lv H."/>
            <person name="Li J."/>
            <person name="Wang J."/>
            <person name="Deng Y."/>
            <person name="Ran L."/>
            <person name="Shi X."/>
            <person name="Wang X."/>
            <person name="Wu Q."/>
            <person name="Li C."/>
            <person name="Ren X."/>
            <person name="Wang J."/>
            <person name="Wang X."/>
            <person name="Li D."/>
            <person name="Liu D."/>
            <person name="Zhang X."/>
            <person name="Ji Z."/>
            <person name="Zhao W."/>
            <person name="Sun Y."/>
            <person name="Zhang Z."/>
            <person name="Bao J."/>
            <person name="Han Y."/>
            <person name="Dong L."/>
            <person name="Ji J."/>
            <person name="Chen P."/>
            <person name="Wu S."/>
            <person name="Liu J."/>
            <person name="Xiao Y."/>
            <person name="Bu D."/>
            <person name="Tan J."/>
            <person name="Yang L."/>
            <person name="Ye C."/>
            <person name="Zhang J."/>
            <person name="Xu J."/>
            <person name="Zhou Y."/>
            <person name="Yu Y."/>
            <person name="Zhang B."/>
            <person name="Zhuang S."/>
            <person name="Wei H."/>
            <person name="Liu B."/>
            <person name="Lei M."/>
            <person name="Yu H."/>
            <person name="Li Y."/>
            <person name="Xu H."/>
            <person name="Wei S."/>
            <person name="He X."/>
            <person name="Fang L."/>
            <person name="Zhang Z."/>
            <person name="Zhang Y."/>
            <person name="Huang X."/>
            <person name="Su Z."/>
            <person name="Tong W."/>
            <person name="Li J."/>
            <person name="Tong Z."/>
            <person name="Li S."/>
            <person name="Ye J."/>
            <person name="Wang L."/>
            <person name="Fang L."/>
            <person name="Lei T."/>
            <person name="Chen C.-S."/>
            <person name="Chen H.-C."/>
            <person name="Xu Z."/>
            <person name="Li H."/>
            <person name="Huang H."/>
            <person name="Zhang F."/>
            <person name="Xu H."/>
            <person name="Li N."/>
            <person name="Zhao C."/>
            <person name="Li S."/>
            <person name="Dong L."/>
            <person name="Huang Y."/>
            <person name="Li L."/>
            <person name="Xi Y."/>
            <person name="Qi Q."/>
            <person name="Li W."/>
            <person name="Zhang B."/>
            <person name="Hu W."/>
            <person name="Zhang Y."/>
            <person name="Tian X."/>
            <person name="Jiao Y."/>
            <person name="Liang X."/>
            <person name="Jin J."/>
            <person name="Gao L."/>
            <person name="Zheng W."/>
            <person name="Hao B."/>
            <person name="Liu S.-M."/>
            <person name="Wang W."/>
            <person name="Yuan L."/>
            <person name="Cao M."/>
            <person name="McDermott J."/>
            <person name="Samudrala R."/>
            <person name="Wang J."/>
            <person name="Wong G.K.-S."/>
            <person name="Yang H."/>
        </authorList>
    </citation>
    <scope>NUCLEOTIDE SEQUENCE [LARGE SCALE GENOMIC DNA]</scope>
    <source>
        <strain>cv. Nipponbare</strain>
    </source>
</reference>
<reference key="6">
    <citation type="journal article" date="2010" name="Plant Physiol.">
        <title>Genome-wide classification and evolutionary analysis of the bHLH family of transcription factors in Arabidopsis, poplar, rice, moss, and algae.</title>
        <authorList>
            <person name="Carretero-Paulet L."/>
            <person name="Galstyan A."/>
            <person name="Roig-Villanova I."/>
            <person name="Martinez-Garcia J.F."/>
            <person name="Bilbao-Castro J.R."/>
            <person name="Robertson D.L."/>
        </authorList>
    </citation>
    <scope>GENE FAMILY</scope>
    <scope>NOMENCLATURE</scope>
</reference>
<reference key="7">
    <citation type="journal article" date="2017" name="Plant Physiol.">
        <title>Rice leaf angle and grain size are affected by the OsBUL1 transcriptional activator complex.</title>
        <authorList>
            <person name="Jang S."/>
            <person name="An G."/>
            <person name="Li H.-Y."/>
        </authorList>
    </citation>
    <scope>FUNCTION</scope>
    <scope>DISRUPTION PHENOTYPE</scope>
    <scope>INDUCTION BY BRASSINOLIDE</scope>
    <scope>SUBUNIT</scope>
    <scope>TISSUE SPECIFICITY</scope>
    <scope>SUBCELLULAR LOCATION</scope>
    <scope>DEVELOPMENTAL STAGE</scope>
    <scope>INTERACTION WITH LO9-177 AND IBH1</scope>
</reference>
<reference key="8">
    <citation type="journal article" date="2017" name="Plant Signal. Behav.">
        <title>A novel trimeric complex in plant cells that contributes to the lamina inclination of rice.</title>
        <authorList>
            <person name="Jang S."/>
        </authorList>
    </citation>
    <scope>SUBUNIT</scope>
</reference>
<reference key="9">
    <citation type="journal article" date="2018" name="Plant Cell">
        <title>An SPX-RLI1 module regulates leaf inclination in response to phosphate availability in rice.</title>
        <authorList>
            <person name="Ruan W."/>
            <person name="Guo M."/>
            <person name="Xu L."/>
            <person name="Wang X."/>
            <person name="Zhao H."/>
            <person name="Wang J."/>
            <person name="Yi K."/>
        </authorList>
    </citation>
    <scope>FUNCTION</scope>
    <scope>INDUCTION BY RLI1</scope>
    <scope>DISRUPTION PHENOTYPE</scope>
    <scope>REPRESSION BY PHOSPHATE DEPRIVATION</scope>
    <source>
        <strain>cv. Nipponbare</strain>
    </source>
</reference>
<reference key="10">
    <citation type="journal article" date="2021" name="Int. J. Mol. Sci.">
        <title>Modulation of Rice Leaf Angle and Grain Size by Expressing OsBCL1 and OsBCL2 under the Control of OsBUL1 Promoter.</title>
        <authorList>
            <person name="Jang S."/>
            <person name="Cho J.-Y."/>
            <person name="Do G.-R."/>
            <person name="Kang Y."/>
            <person name="Li H.-Y."/>
            <person name="Song J."/>
            <person name="Kim H.-Y."/>
            <person name="Kim B.-G."/>
            <person name="Hsing Y.-I."/>
        </authorList>
    </citation>
    <scope>INTERACTION WITH BCL1</scope>
    <source>
        <strain>cv. Tainung 67</strain>
    </source>
</reference>
<dbReference type="EMBL" id="AP008215">
    <property type="protein sequence ID" value="BAF25548.1"/>
    <property type="molecule type" value="Genomic_DNA"/>
</dbReference>
<dbReference type="EMBL" id="AP014965">
    <property type="protein sequence ID" value="BAT08903.1"/>
    <property type="molecule type" value="Genomic_DNA"/>
</dbReference>
<dbReference type="EMBL" id="CM000146">
    <property type="protein sequence ID" value="EAZ45327.1"/>
    <property type="molecule type" value="Genomic_DNA"/>
</dbReference>
<dbReference type="EMBL" id="AK066188">
    <property type="protein sequence ID" value="BAG89857.1"/>
    <property type="molecule type" value="mRNA"/>
</dbReference>
<dbReference type="RefSeq" id="XP_015611378.1">
    <property type="nucleotide sequence ID" value="XM_015755892.1"/>
</dbReference>
<dbReference type="RefSeq" id="XP_015611379.1">
    <property type="nucleotide sequence ID" value="XM_015755893.1"/>
</dbReference>
<dbReference type="SMR" id="Q0J0G7"/>
<dbReference type="FunCoup" id="Q0J0G7">
    <property type="interactions" value="108"/>
</dbReference>
<dbReference type="PaxDb" id="39947-Q0J0G7"/>
<dbReference type="EnsemblPlants" id="Os09t0510500-01">
    <property type="protein sequence ID" value="Os09t0510500-01"/>
    <property type="gene ID" value="Os09g0510500"/>
</dbReference>
<dbReference type="Gramene" id="Os09t0510500-01">
    <property type="protein sequence ID" value="Os09t0510500-01"/>
    <property type="gene ID" value="Os09g0510500"/>
</dbReference>
<dbReference type="KEGG" id="dosa:Os09g0510500"/>
<dbReference type="eggNOG" id="ENOG502R2X6">
    <property type="taxonomic scope" value="Eukaryota"/>
</dbReference>
<dbReference type="HOGENOM" id="CLU_061056_1_0_1"/>
<dbReference type="InParanoid" id="Q0J0G7"/>
<dbReference type="OMA" id="FLFCHGH"/>
<dbReference type="OrthoDB" id="1928604at2759"/>
<dbReference type="Proteomes" id="UP000000763">
    <property type="component" value="Chromosome 9"/>
</dbReference>
<dbReference type="Proteomes" id="UP000007752">
    <property type="component" value="Chromosome 9"/>
</dbReference>
<dbReference type="Proteomes" id="UP000059680">
    <property type="component" value="Chromosome 9"/>
</dbReference>
<dbReference type="GO" id="GO:0005634">
    <property type="term" value="C:nucleus"/>
    <property type="evidence" value="ECO:0000314"/>
    <property type="project" value="UniProtKB"/>
</dbReference>
<dbReference type="GO" id="GO:0003700">
    <property type="term" value="F:DNA-binding transcription factor activity"/>
    <property type="evidence" value="ECO:0000314"/>
    <property type="project" value="UniProtKB"/>
</dbReference>
<dbReference type="GO" id="GO:0046983">
    <property type="term" value="F:protein dimerization activity"/>
    <property type="evidence" value="ECO:0000314"/>
    <property type="project" value="UniProtKB"/>
</dbReference>
<dbReference type="GO" id="GO:0016036">
    <property type="term" value="P:cellular response to phosphate starvation"/>
    <property type="evidence" value="ECO:0000270"/>
    <property type="project" value="UniProtKB"/>
</dbReference>
<dbReference type="GO" id="GO:0051511">
    <property type="term" value="P:negative regulation of unidimensional cell growth"/>
    <property type="evidence" value="ECO:0000315"/>
    <property type="project" value="UniProtKB"/>
</dbReference>
<dbReference type="GO" id="GO:0045893">
    <property type="term" value="P:positive regulation of DNA-templated transcription"/>
    <property type="evidence" value="ECO:0000314"/>
    <property type="project" value="UniProtKB"/>
</dbReference>
<dbReference type="GO" id="GO:2000024">
    <property type="term" value="P:regulation of leaf development"/>
    <property type="evidence" value="ECO:0000315"/>
    <property type="project" value="UniProtKB"/>
</dbReference>
<dbReference type="CDD" id="cd18919">
    <property type="entry name" value="bHLH_AtBPE_like"/>
    <property type="match status" value="1"/>
</dbReference>
<dbReference type="FunFam" id="4.10.280.10:FF:000002">
    <property type="entry name" value="Basic helix-loop-helix transcription factor"/>
    <property type="match status" value="1"/>
</dbReference>
<dbReference type="Gene3D" id="4.10.280.10">
    <property type="entry name" value="Helix-loop-helix DNA-binding domain"/>
    <property type="match status" value="1"/>
</dbReference>
<dbReference type="InterPro" id="IPR011598">
    <property type="entry name" value="bHLH_dom"/>
</dbReference>
<dbReference type="InterPro" id="IPR024097">
    <property type="entry name" value="bHLH_ZIP_TF"/>
</dbReference>
<dbReference type="InterPro" id="IPR036638">
    <property type="entry name" value="HLH_DNA-bd_sf"/>
</dbReference>
<dbReference type="PANTHER" id="PTHR12565">
    <property type="entry name" value="STEROL REGULATORY ELEMENT-BINDING PROTEIN"/>
    <property type="match status" value="1"/>
</dbReference>
<dbReference type="PANTHER" id="PTHR12565:SF431">
    <property type="entry name" value="TRANSCRIPTION FACTOR BHLH137"/>
    <property type="match status" value="1"/>
</dbReference>
<dbReference type="Pfam" id="PF00010">
    <property type="entry name" value="HLH"/>
    <property type="match status" value="1"/>
</dbReference>
<dbReference type="SMART" id="SM00353">
    <property type="entry name" value="HLH"/>
    <property type="match status" value="1"/>
</dbReference>
<dbReference type="SUPFAM" id="SSF47459">
    <property type="entry name" value="HLH, helix-loop-helix DNA-binding domain"/>
    <property type="match status" value="1"/>
</dbReference>
<dbReference type="PROSITE" id="PS50888">
    <property type="entry name" value="BHLH"/>
    <property type="match status" value="1"/>
</dbReference>
<keyword id="KW-0010">Activator</keyword>
<keyword id="KW-0539">Nucleus</keyword>
<keyword id="KW-1185">Reference proteome</keyword>
<keyword id="KW-0804">Transcription</keyword>
<keyword id="KW-0805">Transcription regulation</keyword>
<accession>Q0J0G7</accession>
<accession>A3C0I8</accession>
<protein>
    <recommendedName>
        <fullName evidence="12">Transcription factor BC1</fullName>
    </recommendedName>
    <alternativeName>
        <fullName evidence="8">Basic helix-loop-helix protein 81</fullName>
        <shortName evidence="8">OsbHLH081</shortName>
    </alternativeName>
    <alternativeName>
        <fullName evidence="9 10">Protein BU1-LIKE 1 COMPLEX 1</fullName>
        <shortName evidence="9">OsBC1</shortName>
    </alternativeName>
</protein>
<evidence type="ECO:0000255" key="1">
    <source>
        <dbReference type="PROSITE-ProRule" id="PRU00768"/>
    </source>
</evidence>
<evidence type="ECO:0000255" key="2">
    <source>
        <dbReference type="PROSITE-ProRule" id="PRU00981"/>
    </source>
</evidence>
<evidence type="ECO:0000256" key="3">
    <source>
        <dbReference type="SAM" id="MobiDB-lite"/>
    </source>
</evidence>
<evidence type="ECO:0000269" key="4">
    <source>
    </source>
</evidence>
<evidence type="ECO:0000269" key="5">
    <source>
    </source>
</evidence>
<evidence type="ECO:0000269" key="6">
    <source>
    </source>
</evidence>
<evidence type="ECO:0000269" key="7">
    <source>
    </source>
</evidence>
<evidence type="ECO:0000303" key="8">
    <source>
    </source>
</evidence>
<evidence type="ECO:0000303" key="9">
    <source>
    </source>
</evidence>
<evidence type="ECO:0000303" key="10">
    <source>
    </source>
</evidence>
<evidence type="ECO:0000305" key="11"/>
<evidence type="ECO:0000305" key="12">
    <source>
    </source>
</evidence>
<evidence type="ECO:0000312" key="13">
    <source>
        <dbReference type="EMBL" id="BAT08903.1"/>
    </source>
</evidence>
<evidence type="ECO:0000312" key="14">
    <source>
        <dbReference type="EMBL" id="EAZ45327.1"/>
    </source>
</evidence>
<feature type="chain" id="PRO_0000456866" description="Transcription factor BC1">
    <location>
        <begin position="1"/>
        <end position="282"/>
    </location>
</feature>
<feature type="domain" description="bHLH" evidence="2">
    <location>
        <begin position="113"/>
        <end position="163"/>
    </location>
</feature>
<feature type="region of interest" description="Disordered" evidence="3">
    <location>
        <begin position="34"/>
        <end position="123"/>
    </location>
</feature>
<feature type="region of interest" description="Basic motif; degenerate" evidence="2">
    <location>
        <begin position="113"/>
        <end position="126"/>
    </location>
</feature>
<feature type="region of interest" description="Helix-loop-helix motif" evidence="2">
    <location>
        <begin position="127"/>
        <end position="163"/>
    </location>
</feature>
<feature type="region of interest" description="Disordered" evidence="3">
    <location>
        <begin position="219"/>
        <end position="251"/>
    </location>
</feature>
<feature type="short sequence motif" description="Nuclear localization signal" evidence="1">
    <location>
        <begin position="109"/>
        <end position="116"/>
    </location>
</feature>
<feature type="compositionally biased region" description="Polar residues" evidence="3">
    <location>
        <begin position="45"/>
        <end position="55"/>
    </location>
</feature>
<feature type="compositionally biased region" description="Basic and acidic residues" evidence="3">
    <location>
        <begin position="75"/>
        <end position="84"/>
    </location>
</feature>